<reference evidence="8" key="1">
    <citation type="submission" date="2006-10" db="EMBL/GenBank/DDBJ databases">
        <authorList>
            <consortium name="Sanger Xenopus tropicalis EST/cDNA project"/>
        </authorList>
    </citation>
    <scope>NUCLEOTIDE SEQUENCE [LARGE SCALE MRNA]</scope>
    <source>
        <tissue evidence="8">Egg</tissue>
    </source>
</reference>
<reference evidence="8" key="2">
    <citation type="submission" date="2008-11" db="EMBL/GenBank/DDBJ databases">
        <authorList>
            <consortium name="NIH - Xenopus Gene Collection (XGC) project"/>
        </authorList>
    </citation>
    <scope>NUCLEOTIDE SEQUENCE [LARGE SCALE MRNA]</scope>
    <source>
        <tissue evidence="7">Gastrula</tissue>
    </source>
</reference>
<reference evidence="6" key="3">
    <citation type="journal article" date="2008" name="Mech. Dev.">
        <title>A functional screen for genes involved in Xenopus pronephros development.</title>
        <authorList>
            <person name="Kyuno J."/>
            <person name="Masse K."/>
            <person name="Jones E.A."/>
        </authorList>
    </citation>
    <scope>FUNCTION</scope>
    <scope>TISSUE SPECIFICITY</scope>
</reference>
<protein>
    <recommendedName>
        <fullName>Transcription factor Sox-7</fullName>
    </recommendedName>
</protein>
<evidence type="ECO:0000250" key="1">
    <source>
        <dbReference type="UniProtKB" id="O42342"/>
    </source>
</evidence>
<evidence type="ECO:0000255" key="2">
    <source>
        <dbReference type="PROSITE-ProRule" id="PRU00267"/>
    </source>
</evidence>
<evidence type="ECO:0000255" key="3">
    <source>
        <dbReference type="PROSITE-ProRule" id="PRU00849"/>
    </source>
</evidence>
<evidence type="ECO:0000256" key="4">
    <source>
        <dbReference type="SAM" id="MobiDB-lite"/>
    </source>
</evidence>
<evidence type="ECO:0000269" key="5">
    <source>
    </source>
</evidence>
<evidence type="ECO:0000305" key="6"/>
<evidence type="ECO:0000312" key="7">
    <source>
        <dbReference type="EMBL" id="AAI70859.1"/>
    </source>
</evidence>
<evidence type="ECO:0000312" key="8">
    <source>
        <dbReference type="EMBL" id="CAJ82258.1"/>
    </source>
</evidence>
<feature type="chain" id="PRO_0000370246" description="Transcription factor Sox-7">
    <location>
        <begin position="1"/>
        <end position="362"/>
    </location>
</feature>
<feature type="domain" description="Sox C-terminal" evidence="3">
    <location>
        <begin position="245"/>
        <end position="362"/>
    </location>
</feature>
<feature type="DNA-binding region" description="HMG box" evidence="2">
    <location>
        <begin position="42"/>
        <end position="110"/>
    </location>
</feature>
<feature type="region of interest" description="Disordered" evidence="4">
    <location>
        <begin position="21"/>
        <end position="41"/>
    </location>
</feature>
<feature type="compositionally biased region" description="Basic and acidic residues" evidence="4">
    <location>
        <begin position="32"/>
        <end position="41"/>
    </location>
</feature>
<organism>
    <name type="scientific">Xenopus tropicalis</name>
    <name type="common">Western clawed frog</name>
    <name type="synonym">Silurana tropicalis</name>
    <dbReference type="NCBI Taxonomy" id="8364"/>
    <lineage>
        <taxon>Eukaryota</taxon>
        <taxon>Metazoa</taxon>
        <taxon>Chordata</taxon>
        <taxon>Craniata</taxon>
        <taxon>Vertebrata</taxon>
        <taxon>Euteleostomi</taxon>
        <taxon>Amphibia</taxon>
        <taxon>Batrachia</taxon>
        <taxon>Anura</taxon>
        <taxon>Pipoidea</taxon>
        <taxon>Pipidae</taxon>
        <taxon>Xenopodinae</taxon>
        <taxon>Xenopus</taxon>
        <taxon>Silurana</taxon>
    </lineage>
</organism>
<comment type="function">
    <text evidence="1 5">Transcription factor. Binds to the DNA sequence 5'-AACAAT-3'. Acts downstream of vegt and upstream of nodal signaling to promote endodermal and mesodermal differentiation by promoting vegt-induced expression of both endodermal genes (including endodermin) and mesodermal genes (including snai1/snail and snai2/slug). Induces expression of multiple nodal genes (including nodal, nodal2, nodal4, nodal5 and nodal6) and binds directly to sites within the promoter of the nodal5 gene. The endodermal and mesodermal specification pathways then interact to initiate cardiogenesis. Acts partially redundantly with sox18 during cardiogenesis. Also acts as an antagonist of beta-catenin signaling (By similarity). Regulates (possibly indirectly) development of the pronephros, the functional larval kidney.</text>
</comment>
<comment type="subcellular location">
    <subcellularLocation>
        <location evidence="1 2">Nucleus</location>
    </subcellularLocation>
</comment>
<comment type="tissue specificity">
    <text evidence="5">Expressed in the embryonic pronephric sinus as well as posterior cardinal veins.</text>
</comment>
<accession>Q28GD5</accession>
<proteinExistence type="evidence at transcript level"/>
<keyword id="KW-0010">Activator</keyword>
<keyword id="KW-0217">Developmental protein</keyword>
<keyword id="KW-0238">DNA-binding</keyword>
<keyword id="KW-0539">Nucleus</keyword>
<keyword id="KW-1185">Reference proteome</keyword>
<keyword id="KW-0804">Transcription</keyword>
<keyword id="KW-0805">Transcription regulation</keyword>
<gene>
    <name evidence="8" type="primary">sox7</name>
    <name type="ORF">TEgg131e23.1</name>
</gene>
<sequence>MTTLMGSYSWTEGLDCSPIDEDLSDGLSPHRSPREKGSETRIRRPMNAFMVWAKDERKRLAVQNPDLHNAELSKMLGKSWKALSPAQKRPYVEEAERLRVQHMQDYPNYKYRPRRKKQIKRICKRVDTGFLLSSLSRDQNSVPDTRGCRTAVEKEENGGYPGSALPDMRHYRETPSNGSKHDQTYPYGLPTPPEMSPLEAIDQDQSFYSTPCSEDCHPHINGAVYEYSSRSPILCSHLSQVPIPQTGSSMIPPVPNCPPAYYSSTYHSIHHNYHAHLGQLSPPPEHPHYDAIDQISQAELLGDMDRNEFDQYLNTSLHDPSEMTIHGHVQVSQASDIQPSETSLISVLADATATYYNSYSVS</sequence>
<dbReference type="EMBL" id="CR761431">
    <property type="protein sequence ID" value="CAJ82258.1"/>
    <property type="molecule type" value="mRNA"/>
</dbReference>
<dbReference type="EMBL" id="BC170859">
    <property type="protein sequence ID" value="AAI70859.1"/>
    <property type="molecule type" value="mRNA"/>
</dbReference>
<dbReference type="RefSeq" id="NP_001016326.1">
    <property type="nucleotide sequence ID" value="NM_001016326.2"/>
</dbReference>
<dbReference type="SMR" id="Q28GD5"/>
<dbReference type="FunCoup" id="Q28GD5">
    <property type="interactions" value="1646"/>
</dbReference>
<dbReference type="STRING" id="8364.ENSXETP00000003614"/>
<dbReference type="PaxDb" id="8364-ENSXETP00000001530"/>
<dbReference type="GeneID" id="549080"/>
<dbReference type="KEGG" id="xtr:549080"/>
<dbReference type="AGR" id="Xenbase:XB-GENE-488067"/>
<dbReference type="CTD" id="83595"/>
<dbReference type="Xenbase" id="XB-GENE-488067">
    <property type="gene designation" value="sox7"/>
</dbReference>
<dbReference type="eggNOG" id="KOG0527">
    <property type="taxonomic scope" value="Eukaryota"/>
</dbReference>
<dbReference type="HOGENOM" id="CLU_044994_0_0_1"/>
<dbReference type="InParanoid" id="Q28GD5"/>
<dbReference type="OMA" id="CQEEHAH"/>
<dbReference type="OrthoDB" id="6247875at2759"/>
<dbReference type="PhylomeDB" id="Q28GD5"/>
<dbReference type="Reactome" id="R-XTR-3769402">
    <property type="pathway name" value="Deactivation of the beta-catenin transactivating complex"/>
</dbReference>
<dbReference type="Proteomes" id="UP000008143">
    <property type="component" value="Chromosome 5"/>
</dbReference>
<dbReference type="Bgee" id="ENSXETG00000000693">
    <property type="expression patterns" value="Expressed in olfactory system and 23 other cell types or tissues"/>
</dbReference>
<dbReference type="ExpressionAtlas" id="Q28GD5">
    <property type="expression patterns" value="baseline"/>
</dbReference>
<dbReference type="GO" id="GO:0005634">
    <property type="term" value="C:nucleus"/>
    <property type="evidence" value="ECO:0000250"/>
    <property type="project" value="UniProtKB"/>
</dbReference>
<dbReference type="GO" id="GO:0043565">
    <property type="term" value="F:sequence-specific DNA binding"/>
    <property type="evidence" value="ECO:0000250"/>
    <property type="project" value="UniProtKB"/>
</dbReference>
<dbReference type="GO" id="GO:0000976">
    <property type="term" value="F:transcription cis-regulatory region binding"/>
    <property type="evidence" value="ECO:0000250"/>
    <property type="project" value="UniProtKB"/>
</dbReference>
<dbReference type="GO" id="GO:0001706">
    <property type="term" value="P:endoderm formation"/>
    <property type="evidence" value="ECO:0000250"/>
    <property type="project" value="UniProtKB"/>
</dbReference>
<dbReference type="GO" id="GO:0007507">
    <property type="term" value="P:heart development"/>
    <property type="evidence" value="ECO:0000250"/>
    <property type="project" value="UniProtKB"/>
</dbReference>
<dbReference type="GO" id="GO:0045944">
    <property type="term" value="P:positive regulation of transcription by RNA polymerase II"/>
    <property type="evidence" value="ECO:0000250"/>
    <property type="project" value="UniProtKB"/>
</dbReference>
<dbReference type="GO" id="GO:0048793">
    <property type="term" value="P:pronephros development"/>
    <property type="evidence" value="ECO:0000315"/>
    <property type="project" value="UniProtKB"/>
</dbReference>
<dbReference type="CDD" id="cd22046">
    <property type="entry name" value="HMG-box_SoxF_SOX7"/>
    <property type="match status" value="1"/>
</dbReference>
<dbReference type="FunFam" id="1.10.30.10:FF:000008">
    <property type="entry name" value="transcription factor SOX-7"/>
    <property type="match status" value="1"/>
</dbReference>
<dbReference type="Gene3D" id="1.10.30.10">
    <property type="entry name" value="High mobility group box domain"/>
    <property type="match status" value="1"/>
</dbReference>
<dbReference type="InterPro" id="IPR009071">
    <property type="entry name" value="HMG_box_dom"/>
</dbReference>
<dbReference type="InterPro" id="IPR036910">
    <property type="entry name" value="HMG_box_dom_sf"/>
</dbReference>
<dbReference type="InterPro" id="IPR033392">
    <property type="entry name" value="Sox7/17/18_central"/>
</dbReference>
<dbReference type="InterPro" id="IPR021934">
    <property type="entry name" value="Sox_C"/>
</dbReference>
<dbReference type="InterPro" id="IPR050140">
    <property type="entry name" value="SRY-related_HMG-box_TF-like"/>
</dbReference>
<dbReference type="PANTHER" id="PTHR10270">
    <property type="entry name" value="SOX TRANSCRIPTION FACTOR"/>
    <property type="match status" value="1"/>
</dbReference>
<dbReference type="PANTHER" id="PTHR10270:SF210">
    <property type="entry name" value="TRANSCRIPTION FACTOR SOX-7"/>
    <property type="match status" value="1"/>
</dbReference>
<dbReference type="Pfam" id="PF00505">
    <property type="entry name" value="HMG_box"/>
    <property type="match status" value="1"/>
</dbReference>
<dbReference type="Pfam" id="PF12067">
    <property type="entry name" value="Sox17_18_mid"/>
    <property type="match status" value="1"/>
</dbReference>
<dbReference type="SMART" id="SM00398">
    <property type="entry name" value="HMG"/>
    <property type="match status" value="1"/>
</dbReference>
<dbReference type="SUPFAM" id="SSF47095">
    <property type="entry name" value="HMG-box"/>
    <property type="match status" value="1"/>
</dbReference>
<dbReference type="PROSITE" id="PS50118">
    <property type="entry name" value="HMG_BOX_2"/>
    <property type="match status" value="1"/>
</dbReference>
<dbReference type="PROSITE" id="PS51516">
    <property type="entry name" value="SOX_C"/>
    <property type="match status" value="1"/>
</dbReference>
<name>SOX7_XENTR</name>